<proteinExistence type="inferred from homology"/>
<name>YBJL_ECOSE</name>
<feature type="chain" id="PRO_1000135184" description="Putative transport protein YbjL">
    <location>
        <begin position="1"/>
        <end position="561"/>
    </location>
</feature>
<feature type="transmembrane region" description="Helical" evidence="1">
    <location>
        <begin position="8"/>
        <end position="28"/>
    </location>
</feature>
<feature type="transmembrane region" description="Helical" evidence="1">
    <location>
        <begin position="32"/>
        <end position="52"/>
    </location>
</feature>
<feature type="transmembrane region" description="Helical" evidence="1">
    <location>
        <begin position="66"/>
        <end position="86"/>
    </location>
</feature>
<feature type="transmembrane region" description="Helical" evidence="1">
    <location>
        <begin position="94"/>
        <end position="114"/>
    </location>
</feature>
<feature type="transmembrane region" description="Helical" evidence="1">
    <location>
        <begin position="158"/>
        <end position="178"/>
    </location>
</feature>
<feature type="transmembrane region" description="Helical" evidence="1">
    <location>
        <begin position="383"/>
        <end position="403"/>
    </location>
</feature>
<feature type="transmembrane region" description="Helical" evidence="1">
    <location>
        <begin position="406"/>
        <end position="426"/>
    </location>
</feature>
<feature type="transmembrane region" description="Helical" evidence="1">
    <location>
        <begin position="451"/>
        <end position="471"/>
    </location>
</feature>
<feature type="transmembrane region" description="Helical" evidence="1">
    <location>
        <begin position="475"/>
        <end position="495"/>
    </location>
</feature>
<feature type="transmembrane region" description="Helical" evidence="1">
    <location>
        <begin position="540"/>
        <end position="560"/>
    </location>
</feature>
<feature type="domain" description="RCK C-terminal 1" evidence="1">
    <location>
        <begin position="200"/>
        <end position="288"/>
    </location>
</feature>
<feature type="domain" description="RCK C-terminal 2" evidence="1">
    <location>
        <begin position="292"/>
        <end position="373"/>
    </location>
</feature>
<comment type="subcellular location">
    <subcellularLocation>
        <location evidence="1">Cell membrane</location>
        <topology evidence="1">Multi-pass membrane protein</topology>
    </subcellularLocation>
</comment>
<comment type="similarity">
    <text evidence="1">Belongs to the AAE transporter (TC 2.A.81) family. YbjL subfamily.</text>
</comment>
<protein>
    <recommendedName>
        <fullName evidence="1">Putative transport protein YbjL</fullName>
    </recommendedName>
</protein>
<gene>
    <name evidence="1" type="primary">ybjL</name>
    <name type="ordered locus">ECSE_0905</name>
</gene>
<keyword id="KW-1003">Cell membrane</keyword>
<keyword id="KW-0472">Membrane</keyword>
<keyword id="KW-0677">Repeat</keyword>
<keyword id="KW-0812">Transmembrane</keyword>
<keyword id="KW-1133">Transmembrane helix</keyword>
<keyword id="KW-0813">Transport</keyword>
<reference key="1">
    <citation type="journal article" date="2008" name="DNA Res.">
        <title>Complete genome sequence and comparative analysis of the wild-type commensal Escherichia coli strain SE11 isolated from a healthy adult.</title>
        <authorList>
            <person name="Oshima K."/>
            <person name="Toh H."/>
            <person name="Ogura Y."/>
            <person name="Sasamoto H."/>
            <person name="Morita H."/>
            <person name="Park S.-H."/>
            <person name="Ooka T."/>
            <person name="Iyoda S."/>
            <person name="Taylor T.D."/>
            <person name="Hayashi T."/>
            <person name="Itoh K."/>
            <person name="Hattori M."/>
        </authorList>
    </citation>
    <scope>NUCLEOTIDE SEQUENCE [LARGE SCALE GENOMIC DNA]</scope>
    <source>
        <strain>SE11</strain>
    </source>
</reference>
<dbReference type="EMBL" id="AP009240">
    <property type="protein sequence ID" value="BAG76429.1"/>
    <property type="molecule type" value="Genomic_DNA"/>
</dbReference>
<dbReference type="RefSeq" id="WP_001024876.1">
    <property type="nucleotide sequence ID" value="NC_011415.1"/>
</dbReference>
<dbReference type="SMR" id="B6I8G8"/>
<dbReference type="KEGG" id="ecy:ECSE_0905"/>
<dbReference type="HOGENOM" id="CLU_035023_2_2_6"/>
<dbReference type="Proteomes" id="UP000008199">
    <property type="component" value="Chromosome"/>
</dbReference>
<dbReference type="GO" id="GO:0005886">
    <property type="term" value="C:plasma membrane"/>
    <property type="evidence" value="ECO:0007669"/>
    <property type="project" value="UniProtKB-SubCell"/>
</dbReference>
<dbReference type="GO" id="GO:0008324">
    <property type="term" value="F:monoatomic cation transmembrane transporter activity"/>
    <property type="evidence" value="ECO:0007669"/>
    <property type="project" value="InterPro"/>
</dbReference>
<dbReference type="GO" id="GO:0006813">
    <property type="term" value="P:potassium ion transport"/>
    <property type="evidence" value="ECO:0007669"/>
    <property type="project" value="InterPro"/>
</dbReference>
<dbReference type="FunFam" id="3.30.70.1450:FF:000003">
    <property type="entry name" value="Putative transport protein YbjL"/>
    <property type="match status" value="1"/>
</dbReference>
<dbReference type="Gene3D" id="3.30.70.1450">
    <property type="entry name" value="Regulator of K+ conductance, C-terminal domain"/>
    <property type="match status" value="2"/>
</dbReference>
<dbReference type="HAMAP" id="MF_01015">
    <property type="entry name" value="YbjL"/>
    <property type="match status" value="1"/>
</dbReference>
<dbReference type="InterPro" id="IPR050144">
    <property type="entry name" value="AAE_transporter"/>
</dbReference>
<dbReference type="InterPro" id="IPR006037">
    <property type="entry name" value="RCK_C"/>
</dbReference>
<dbReference type="InterPro" id="IPR036721">
    <property type="entry name" value="RCK_C_sf"/>
</dbReference>
<dbReference type="InterPro" id="IPR023017">
    <property type="entry name" value="Transp_YbjL_put"/>
</dbReference>
<dbReference type="InterPro" id="IPR006512">
    <property type="entry name" value="YidE_YbjL"/>
</dbReference>
<dbReference type="NCBIfam" id="NF003440">
    <property type="entry name" value="PRK04972.1"/>
    <property type="match status" value="1"/>
</dbReference>
<dbReference type="NCBIfam" id="TIGR01625">
    <property type="entry name" value="YidE_YbjL_dupl"/>
    <property type="match status" value="2"/>
</dbReference>
<dbReference type="PANTHER" id="PTHR30445">
    <property type="entry name" value="K(+)_H(+) ANTIPORTER SUBUNIT KHTT"/>
    <property type="match status" value="1"/>
</dbReference>
<dbReference type="PANTHER" id="PTHR30445:SF10">
    <property type="entry name" value="TRANSPORT PROTEIN YBJL-RELATED"/>
    <property type="match status" value="1"/>
</dbReference>
<dbReference type="Pfam" id="PF06826">
    <property type="entry name" value="Asp-Al_Ex"/>
    <property type="match status" value="2"/>
</dbReference>
<dbReference type="Pfam" id="PF02080">
    <property type="entry name" value="TrkA_C"/>
    <property type="match status" value="2"/>
</dbReference>
<dbReference type="SUPFAM" id="SSF116726">
    <property type="entry name" value="TrkA C-terminal domain-like"/>
    <property type="match status" value="2"/>
</dbReference>
<dbReference type="PROSITE" id="PS51202">
    <property type="entry name" value="RCK_C"/>
    <property type="match status" value="2"/>
</dbReference>
<evidence type="ECO:0000255" key="1">
    <source>
        <dbReference type="HAMAP-Rule" id="MF_01015"/>
    </source>
</evidence>
<sequence length="561" mass="60351">MNINVAELLNGNYILLLFVVLALGLCLGKLRLGSIQLGNSIGVLVVSLLLGQQHFSINTDALNLGFMLFIFCVGVEAGPNFFSIFFRDGKNYLMLALVMVGSALVIALGLGKLFGWDIGLTAGMLAGSMTSTPVLVGAGDTLRHSGMESRQLSLALDNLSLGYALTYLIGLVSLIVGARYLPKLQHQDLQTSAQQIARERGLDTDANRKVYLPVIRAYRVGPELVAWTDGKNLRELGIYRQTGCYIERIRRNGILANPDGDAVLQMGDEIALVGYPDAHARLDPSFRNGKEVFDRDLLDMRIVTEEVVVKNHNAVGKRLAQLKLTDHGCFLNRVIRSQIEMPIDDNVVLNKGDVLQVSGDARRVKTIADRIGFISIHSQVTDLLAFCAFFVIGLMIGMITFQFSTFSFGMGNAAGLLFAGIMLGFMRANHPTFGYIPQGALSMVKEFGLMVFMAGVGLSAGSGINNGLGAIGGQMLIAGLIVSLVPVVICFLFGAYVLRMNRALLFGAMMGARTCAPAMEIISDTARSNIPALGYAGTYAIANVLLTLAGTIIVMVWPGLG</sequence>
<accession>B6I8G8</accession>
<organism>
    <name type="scientific">Escherichia coli (strain SE11)</name>
    <dbReference type="NCBI Taxonomy" id="409438"/>
    <lineage>
        <taxon>Bacteria</taxon>
        <taxon>Pseudomonadati</taxon>
        <taxon>Pseudomonadota</taxon>
        <taxon>Gammaproteobacteria</taxon>
        <taxon>Enterobacterales</taxon>
        <taxon>Enterobacteriaceae</taxon>
        <taxon>Escherichia</taxon>
    </lineage>
</organism>